<accession>Q824G1</accession>
<comment type="function">
    <text evidence="1">One of the primary rRNA binding proteins, it binds directly to 16S rRNA where it nucleates assembly of the head domain of the 30S subunit. Is located at the subunit interface close to the decoding center, probably blocks exit of the E-site tRNA.</text>
</comment>
<comment type="subunit">
    <text evidence="1">Part of the 30S ribosomal subunit. Contacts proteins S9 and S11.</text>
</comment>
<comment type="similarity">
    <text evidence="1">Belongs to the universal ribosomal protein uS7 family.</text>
</comment>
<name>RS7_CHLCV</name>
<keyword id="KW-0687">Ribonucleoprotein</keyword>
<keyword id="KW-0689">Ribosomal protein</keyword>
<keyword id="KW-0694">RNA-binding</keyword>
<keyword id="KW-0699">rRNA-binding</keyword>
<keyword id="KW-0820">tRNA-binding</keyword>
<gene>
    <name evidence="1" type="primary">rpsG</name>
    <name type="ordered locus">CCA_00191</name>
</gene>
<reference key="1">
    <citation type="journal article" date="2003" name="Nucleic Acids Res.">
        <title>Genome sequence of Chlamydophila caviae (Chlamydia psittaci GPIC): examining the role of niche-specific genes in the evolution of the Chlamydiaceae.</title>
        <authorList>
            <person name="Read T.D."/>
            <person name="Myers G.S.A."/>
            <person name="Brunham R.C."/>
            <person name="Nelson W.C."/>
            <person name="Paulsen I.T."/>
            <person name="Heidelberg J.F."/>
            <person name="Holtzapple E.K."/>
            <person name="Khouri H.M."/>
            <person name="Federova N.B."/>
            <person name="Carty H.A."/>
            <person name="Umayam L.A."/>
            <person name="Haft D.H."/>
            <person name="Peterson J.D."/>
            <person name="Beanan M.J."/>
            <person name="White O."/>
            <person name="Salzberg S.L."/>
            <person name="Hsia R.-C."/>
            <person name="McClarty G."/>
            <person name="Rank R.G."/>
            <person name="Bavoil P.M."/>
            <person name="Fraser C.M."/>
        </authorList>
    </citation>
    <scope>NUCLEOTIDE SEQUENCE [LARGE SCALE GENOMIC DNA]</scope>
    <source>
        <strain>ATCC VR-813 / DSM 19441 / 03DC25 / GPIC</strain>
    </source>
</reference>
<evidence type="ECO:0000255" key="1">
    <source>
        <dbReference type="HAMAP-Rule" id="MF_00480"/>
    </source>
</evidence>
<evidence type="ECO:0000305" key="2"/>
<protein>
    <recommendedName>
        <fullName evidence="1">Small ribosomal subunit protein uS7</fullName>
    </recommendedName>
    <alternativeName>
        <fullName evidence="2">30S ribosomal protein S7</fullName>
    </alternativeName>
</protein>
<proteinExistence type="inferred from homology"/>
<dbReference type="EMBL" id="AE015925">
    <property type="protein sequence ID" value="AAP04942.1"/>
    <property type="molecule type" value="Genomic_DNA"/>
</dbReference>
<dbReference type="RefSeq" id="WP_011006162.1">
    <property type="nucleotide sequence ID" value="NC_003361.3"/>
</dbReference>
<dbReference type="SMR" id="Q824G1"/>
<dbReference type="STRING" id="227941.CCA_00191"/>
<dbReference type="KEGG" id="cca:CCA_00191"/>
<dbReference type="eggNOG" id="COG0049">
    <property type="taxonomic scope" value="Bacteria"/>
</dbReference>
<dbReference type="HOGENOM" id="CLU_072226_1_1_0"/>
<dbReference type="OrthoDB" id="9807653at2"/>
<dbReference type="Proteomes" id="UP000002193">
    <property type="component" value="Chromosome"/>
</dbReference>
<dbReference type="GO" id="GO:0015935">
    <property type="term" value="C:small ribosomal subunit"/>
    <property type="evidence" value="ECO:0007669"/>
    <property type="project" value="InterPro"/>
</dbReference>
<dbReference type="GO" id="GO:0019843">
    <property type="term" value="F:rRNA binding"/>
    <property type="evidence" value="ECO:0007669"/>
    <property type="project" value="UniProtKB-UniRule"/>
</dbReference>
<dbReference type="GO" id="GO:0003735">
    <property type="term" value="F:structural constituent of ribosome"/>
    <property type="evidence" value="ECO:0007669"/>
    <property type="project" value="InterPro"/>
</dbReference>
<dbReference type="GO" id="GO:0000049">
    <property type="term" value="F:tRNA binding"/>
    <property type="evidence" value="ECO:0007669"/>
    <property type="project" value="UniProtKB-UniRule"/>
</dbReference>
<dbReference type="GO" id="GO:0006412">
    <property type="term" value="P:translation"/>
    <property type="evidence" value="ECO:0007669"/>
    <property type="project" value="UniProtKB-UniRule"/>
</dbReference>
<dbReference type="CDD" id="cd14869">
    <property type="entry name" value="uS7_Bacteria"/>
    <property type="match status" value="1"/>
</dbReference>
<dbReference type="FunFam" id="1.10.455.10:FF:000001">
    <property type="entry name" value="30S ribosomal protein S7"/>
    <property type="match status" value="1"/>
</dbReference>
<dbReference type="Gene3D" id="1.10.455.10">
    <property type="entry name" value="Ribosomal protein S7 domain"/>
    <property type="match status" value="1"/>
</dbReference>
<dbReference type="HAMAP" id="MF_00480_B">
    <property type="entry name" value="Ribosomal_uS7_B"/>
    <property type="match status" value="1"/>
</dbReference>
<dbReference type="InterPro" id="IPR000235">
    <property type="entry name" value="Ribosomal_uS7"/>
</dbReference>
<dbReference type="InterPro" id="IPR005717">
    <property type="entry name" value="Ribosomal_uS7_bac/org-type"/>
</dbReference>
<dbReference type="InterPro" id="IPR020606">
    <property type="entry name" value="Ribosomal_uS7_CS"/>
</dbReference>
<dbReference type="InterPro" id="IPR023798">
    <property type="entry name" value="Ribosomal_uS7_dom"/>
</dbReference>
<dbReference type="InterPro" id="IPR036823">
    <property type="entry name" value="Ribosomal_uS7_dom_sf"/>
</dbReference>
<dbReference type="NCBIfam" id="TIGR01029">
    <property type="entry name" value="rpsG_bact"/>
    <property type="match status" value="1"/>
</dbReference>
<dbReference type="PANTHER" id="PTHR11205">
    <property type="entry name" value="RIBOSOMAL PROTEIN S7"/>
    <property type="match status" value="1"/>
</dbReference>
<dbReference type="Pfam" id="PF00177">
    <property type="entry name" value="Ribosomal_S7"/>
    <property type="match status" value="1"/>
</dbReference>
<dbReference type="PIRSF" id="PIRSF002122">
    <property type="entry name" value="RPS7p_RPS7a_RPS5e_RPS7o"/>
    <property type="match status" value="1"/>
</dbReference>
<dbReference type="SUPFAM" id="SSF47973">
    <property type="entry name" value="Ribosomal protein S7"/>
    <property type="match status" value="1"/>
</dbReference>
<dbReference type="PROSITE" id="PS00052">
    <property type="entry name" value="RIBOSOMAL_S7"/>
    <property type="match status" value="1"/>
</dbReference>
<organism>
    <name type="scientific">Chlamydia caviae (strain ATCC VR-813 / DSM 19441 / 03DC25 / GPIC)</name>
    <name type="common">Chlamydophila caviae</name>
    <dbReference type="NCBI Taxonomy" id="227941"/>
    <lineage>
        <taxon>Bacteria</taxon>
        <taxon>Pseudomonadati</taxon>
        <taxon>Chlamydiota</taxon>
        <taxon>Chlamydiia</taxon>
        <taxon>Chlamydiales</taxon>
        <taxon>Chlamydiaceae</taxon>
        <taxon>Chlamydia/Chlamydophila group</taxon>
        <taxon>Chlamydia</taxon>
    </lineage>
</organism>
<feature type="chain" id="PRO_0000124243" description="Small ribosomal subunit protein uS7">
    <location>
        <begin position="1"/>
        <end position="157"/>
    </location>
</feature>
<sequence length="157" mass="17759">MSRRHAAEKKVIPADPIYGSVTLERFINKVMMHGKKSIARKIVYSALERFSKKIGAENVLEAFKEALENAKPLLEVRSRRVGGATYQVPVEVAAGRRDCLAMKWIINNARNKPGKCMEVGLATELIDCFNKQGATIKKREDTHRMAEANKAFAHYKW</sequence>